<reference key="1">
    <citation type="journal article" date="2014" name="New Phytol.">
        <title>Complex regulation of secondary metabolism controlling pathogenicity in the phytopathogenic fungus Alternaria alternata.</title>
        <authorList>
            <person name="Takaoka S."/>
            <person name="Kurata M."/>
            <person name="Harimoto Y."/>
            <person name="Hatta R."/>
            <person name="Yamamoto M."/>
            <person name="Akimitsu K."/>
            <person name="Tsuge T."/>
        </authorList>
    </citation>
    <scope>NUCLEOTIDE SEQUENCE [GENOMIC DNA]</scope>
    <source>
        <strain>NAF8</strain>
    </source>
</reference>
<reference key="2">
    <citation type="journal article" date="2002" name="Genetics">
        <title>A conditionally dispensable chromosome controls host-specific pathogenicity in the fungal plant pathogen Alternaria alternata.</title>
        <authorList>
            <person name="Hatta R."/>
            <person name="Ito K."/>
            <person name="Hosaki Y."/>
            <person name="Tanaka T."/>
            <person name="Tanaka A."/>
            <person name="Yamamoto M."/>
            <person name="Akimitsu K."/>
            <person name="Tsuge T."/>
        </authorList>
    </citation>
    <scope>FUNCTION</scope>
    <source>
        <strain>NAF8</strain>
    </source>
</reference>
<reference key="3">
    <citation type="journal article" date="2004" name="Mol. Microbiol.">
        <title>Dissection of the host range of the fungal plant pathogen Alternaria alternata by modification of secondary metabolism.</title>
        <authorList>
            <person name="Ito K."/>
            <person name="Tanaka T."/>
            <person name="Hatta R."/>
            <person name="Yamamoto M."/>
            <person name="Akimitsu K."/>
            <person name="Tsuge T."/>
        </authorList>
    </citation>
    <scope>FUNCTION</scope>
    <source>
        <strain>NAF8</strain>
    </source>
</reference>
<reference key="4">
    <citation type="journal article" date="2005" name="J. Gen. Plant Pathol.">
        <title>Structural analysis of cosmid clone pcAFT-2 carrying AFT10-1 encoding an acyl-CoA dehydrogenase involved in AF-toxin production in the strawberry pathotype of Alternaria alternata.</title>
        <authorList>
            <person name="Ruswandi S."/>
            <person name="Kitani K."/>
            <person name="Akimitsu K."/>
            <person name="Tsuge T."/>
            <person name="Shiraishi T."/>
            <person name="Yamamoto M."/>
        </authorList>
    </citation>
    <scope>FUNCTION</scope>
    <source>
        <strain>NAF8</strain>
    </source>
</reference>
<reference key="5">
    <citation type="journal article" date="2008" name="Mol. Plant Microbe Interact.">
        <title>Functional analysis of a multicopy host-selective ACT-toxin biosynthesis gene in the tangerine pathotype of Alternaria alternata using RNA silencing.</title>
        <authorList>
            <person name="Miyamoto Y."/>
            <person name="Masunaka A."/>
            <person name="Tsuge T."/>
            <person name="Yamamoto M."/>
            <person name="Ohtani K."/>
            <person name="Fukumoto T."/>
            <person name="Gomi K."/>
            <person name="Peever T.L."/>
            <person name="Akimitsu K."/>
        </authorList>
    </citation>
    <scope>FUNCTION</scope>
    <source>
        <strain>NAF8</strain>
    </source>
</reference>
<reference key="6">
    <citation type="journal article" date="2013" name="FEMS Microbiol. Rev.">
        <title>Host-selective toxins produced by the plant pathogenic fungus Alternaria alternata.</title>
        <authorList>
            <person name="Tsuge T."/>
            <person name="Harimoto Y."/>
            <person name="Akimitsu K."/>
            <person name="Ohtani K."/>
            <person name="Kodama M."/>
            <person name="Akagi Y."/>
            <person name="Egusa M."/>
            <person name="Yamamoto M."/>
            <person name="Otani H."/>
        </authorList>
    </citation>
    <scope>REVIEW ON HOST-SELECTIVE TOXINS</scope>
</reference>
<protein>
    <recommendedName>
        <fullName evidence="11">Reducing polyketide synthase AFT16-1</fullName>
        <shortName evidence="11">PKS AFT16-1</shortName>
        <ecNumber evidence="11">2.3.1.-</ecNumber>
    </recommendedName>
    <alternativeName>
        <fullName evidence="11">AF-toxin biosynthesis protein 16-1</fullName>
    </alternativeName>
</protein>
<proteinExistence type="inferred from homology"/>
<sequence>MNGKSRDNGHDGKRQPVVPAEPIAIVGTAMRLPGDATNPSKLWQLLRNPPSDLSRRPPSERFSSAGFFHEDPEHHGTSNSEQSYFLREDIRAFDAAFFSIAPREAEAIDPQHRLLLEVVYEALEAAGIPLEKTQGSDTAVYVGQMSNDYWDHLLRDLDSIPKYMATGTARSVTANRLSYFFDWHGPSMTIDTACSSSMVALHEAVQVLRSGRAGMAVAAGCHLVLGPESYVIESKLRMISPTGTCKMWDAGADGYARAEGCAALILKTLSSALRDGDPIAALIRETGVNQDGRTRGITMPSAQAQAALIRETYLRAGLDPTHPRDQPQLFEAHGTGTQAGDPIEAEAIHLAFFNDGVAHKGTRERKEREKLLVGSIKTVVGHLEATAGLAGILKGIAAMNHRMVPPNLWFRTLNQRIAPFYRDFRVPTVLEEWPMTGFDGTLRCSVNSFGFGGTNAHTILESYEPQLVTATKMPREISFITPLTFSAASAASLVAVVDSYRRHLASKQDISLADLAFTLQSRRSALPYRIAFSGTDITSLIKQMSESVDSVKGTANVSIGTLNQQGKLEGGPPKLLGVFTGQGAQWPGMGRELLKSSKVFSDAIIKMEDSLATLPDPPSWSLVDQFKAKASPSSSEEATVAQPVSLALQIGLVDLLRASGVEFDSVVAHSSGEIAAAYTTGLISAHDAIRIAYYRGKYSALATEGGGMMAVGMSFAEAEAFCNQEQLRGRVTAAASNSPKSTTLSGRLSTLKEAASLLGNTFHRFLKVDKAYHSDAMLPCCKPFQAILEKCDIKVHKPNDVLWVSSVREGQQPRSFADLLSGPYWVETLHKPVLFSQALTRVLQMRSFDATLEIGPHPALRGPSLQTHADISLEKGKVLLYKGVLERFKHDGEAFSSCLGFLWQHFGWAHFEAYRSTSLTTDVPRVLDQLPTYPWNHESLYWTESSNSYRFRYREAYHPLLGFRSVDSHAMELRWKNVWSLREMPWLKGHVVQGQAVVPGVSYVTLALEAAAALGREGQETTRIELHDINIHRAIIVEEDEYSGTNVFVSVSRQNPDASCTRATFNIYASTNHEKEPFHVCSGDILLSHFAKDSGIQALGEFVVSTVYKDMSSVEPSLFYSEMKEVGLCWKEPFLSDSMYRSHHRSVLSATRSTADAHDGQLLLSPVLLDIGFQGALVGFASPGDGRLWNPYLPTHIDRCTFDLENLKLNKPCYDEVYFSSAVMGSTLPDLSTTATFTCDVYGFYAIDGNPFVQVEGLKFSCMYPAQETNDREMFANETWMPASPLDMELQPYDAQKHMGNLGAVVENLSHCDPRMKILHISDGESLVVPILESLQGAFARLDIADSSQSPALRHVEEVKELFPKDSKRIWSSDLNLTKLTSSPAIAENSYDLIICAQTIETGDDVESRCSKLRKLLKLGGSIILSTSPGTSCNLPLQRCGFTGVELELSVGPESRLILTRAKDDTSKTLETPLDDLDACTGEVIVIGGHQPEIQAIVDTFQKDVAGKLSKMTLLESLSDLETYGIPTDATVLCLADLHDDTLRNLAEGTLGGMKLLFETARRVLWVTQGRRNQNPFASMMVGLGRCIISESPLLNLQFLDIEDPLSDPVTHKTISECFIRLISLTTTGDFNVVRSWNQEPEMVLSQGKLLIPRIRPLPALNDRLNCQNRIIKKPLIAGDGTSVELTRSGAFYAAQEYDDYSAGRRITISHSVSLPIELPGQMKGYLGLGTMSSGERVVVISPNNRNIQSAEECAFAVHFQPRGNEADTLALIASAIFIRMAWEHTSDYVVLHQPSQSVYRLGTQMAEDAKSKLYFSVSGRNDLEKHANVVSIPSMATRQSLRNLMPGQVGAFIHVPGLAGAGDRVSADRMIRAMSTTCKIFHLATAAASSQNKSIDIRLSFNWKKACRILVQSVEDVAKFGNSNMLAENQPVKCIGIAEISGTPFSYDAARIIDWTKDSRLKVNIQSKNPTKHFSPNKTYLLVGLTGDLGRSLAQWMVRCGAQHIVLTSRSPRVPDSWLQACREISPQAQVRVFKMDVTDEADVRSVCHSICKSMPPIGGVANAAMVMDDCLFHKLQLASFNRVVEPKVVGSMILDKIFHDVDLDFFIMFSSISCIVGNRGQSSYSAANLAETTIASGRRSRGLSASTLALGMVVGVGYVARANLPTEAIKDNVRMQNGIPLGETDVHTAFFEAMLLGKESSRLIPELITGLKSIGSEDVELPLWHENPRFSHLSLLEGLDDVSLDSKKSSQGKVSVREQLRQSTMPQEPFEILSGSLKQKLKVMLKIDKQEISDEVALVQMGIDSLSAVEIRSWFAKEVGVDLPVLKILNGASIRGLCLEAIGQWKK</sequence>
<gene>
    <name evidence="11" type="primary">AFT16-1</name>
</gene>
<evidence type="ECO:0000255" key="1"/>
<evidence type="ECO:0000255" key="2">
    <source>
        <dbReference type="PROSITE-ProRule" id="PRU00258"/>
    </source>
</evidence>
<evidence type="ECO:0000255" key="3">
    <source>
        <dbReference type="PROSITE-ProRule" id="PRU01348"/>
    </source>
</evidence>
<evidence type="ECO:0000255" key="4">
    <source>
        <dbReference type="PROSITE-ProRule" id="PRU01363"/>
    </source>
</evidence>
<evidence type="ECO:0000256" key="5">
    <source>
        <dbReference type="SAM" id="MobiDB-lite"/>
    </source>
</evidence>
<evidence type="ECO:0000269" key="6">
    <source>
    </source>
</evidence>
<evidence type="ECO:0000269" key="7">
    <source>
    </source>
</evidence>
<evidence type="ECO:0000269" key="8">
    <source>
    </source>
</evidence>
<evidence type="ECO:0000269" key="9">
    <source ref="4"/>
</evidence>
<evidence type="ECO:0000303" key="10">
    <source>
    </source>
</evidence>
<evidence type="ECO:0000305" key="11"/>
<evidence type="ECO:0000305" key="12">
    <source>
    </source>
</evidence>
<organism>
    <name type="scientific">Alternaria alternata</name>
    <name type="common">Alternaria rot fungus</name>
    <name type="synonym">Torula alternata</name>
    <dbReference type="NCBI Taxonomy" id="5599"/>
    <lineage>
        <taxon>Eukaryota</taxon>
        <taxon>Fungi</taxon>
        <taxon>Dikarya</taxon>
        <taxon>Ascomycota</taxon>
        <taxon>Pezizomycotina</taxon>
        <taxon>Dothideomycetes</taxon>
        <taxon>Pleosporomycetidae</taxon>
        <taxon>Pleosporales</taxon>
        <taxon>Pleosporineae</taxon>
        <taxon>Pleosporaceae</taxon>
        <taxon>Alternaria</taxon>
        <taxon>Alternaria sect. Alternaria</taxon>
        <taxon>Alternaria alternata complex</taxon>
    </lineage>
</organism>
<accession>V5Y0F7</accession>
<comment type="function">
    <text evidence="6 7 8 9 10 12">Reducing polyketide synthase; part of the gene clusters that mediate the biosynthesis of the host-selective toxins (HSTs) AF-toxins responsible for Alternaria black spot of strawberry disease by the strawberry pathotype (Probable). AF-toxin I and III are valine derivatives of 2,3-dyhydroxy-isovaleric acid and 2-hydroxy-isovaleric acid respectively, while AF II is an isoleucine derivative of 2-hydroxy-valeric acid (PubMed:15066029, PubMed:22846083, Ref.4). These derivatives are bound to a 9,10-epoxy-8-hydroxy-9-methyl-decatrienoic acid (EDA) moiety (PubMed:15066029, PubMed:22846083, Ref.4). On cellular level, AF-toxins affect plasma membrane of susceptible cells and cause a sudden increase in loss of K(+) after a few minutes of toxin treatment (PubMed:22846083). The aldo-keto reductase AFTS1 catalyzes the conversion of 2-keto-isovaleric acid (2-KIV) to 2-hydroxy-isovaleric acid (2-HIV) by reduction of its ketone to an alcohol (PubMed:15066029). The acyl-CoA ligase AFT1, the hydrolase AFT2 and the enoyl-CoA hydratases AFT3 and AFT6, but also the polyketide synthase AFT9, the acyl-CoA dehydrogenase AFT10, the cytochrome P450 monooxygenase AFT11 and the oxidoreductase AFT12 are all involved in the biosynthesis of the AK-, AF- and ACT-toxin common EDA structural moiety (PubMed:12019223, PubMed:18986255, Ref.4). The exact function of each enzyme, and of additional enzymes identified within the AF-toxin clusters have still to be determined (PubMed:12019223, PubMed:18986255, Ref.4).</text>
</comment>
<comment type="pathway">
    <text evidence="11">Mycotoxin biosynthesis.</text>
</comment>
<comment type="domain">
    <text evidence="11">Multidomain protein; including a ketosynthase (KS) that catalyzes repeated decarboxylative condensation to elongate the polyketide backbone; a malonyl-CoA:ACP transacylase (MAT) that selects and transfers the extender unit malonyl-CoA; a dehydratase (DH) domain that reduces hydroxyl groups to enoyl groups; a ketoreductase (KR) domain that catalyzes beta-ketoreduction steps; and an acyl-carrier protein (ACP) that serves as the tether of the growing and completed polyketide via its phosphopantetheinyl arm.</text>
</comment>
<comment type="miscellaneous">
    <text evidence="6">Gene clusters encoding host-selective toxins (HSTs) are localized on conditionally dispensable chromosomes (CDCs), also called supernumerary chromosomes, where they are present in multiple copies (PubMed:12019223). The CDCs are not essential for saprophytic growth but controls host-selective pathogenicity (PubMed:12019223).</text>
</comment>
<keyword id="KW-0012">Acyltransferase</keyword>
<keyword id="KW-0511">Multifunctional enzyme</keyword>
<keyword id="KW-0521">NADP</keyword>
<keyword id="KW-0560">Oxidoreductase</keyword>
<keyword id="KW-0596">Phosphopantetheine</keyword>
<keyword id="KW-0597">Phosphoprotein</keyword>
<keyword id="KW-0808">Transferase</keyword>
<keyword id="KW-0843">Virulence</keyword>
<name>AF161_ALTAL</name>
<feature type="chain" id="PRO_0000444854" description="Reducing polyketide synthase AFT16-1">
    <location>
        <begin position="1"/>
        <end position="2349"/>
    </location>
</feature>
<feature type="domain" description="Ketosynthase family 3 (KS3)" evidence="3">
    <location>
        <begin position="20"/>
        <end position="462"/>
    </location>
</feature>
<feature type="domain" description="PKS/mFAS DH" evidence="4">
    <location>
        <begin position="958"/>
        <end position="1269"/>
    </location>
</feature>
<feature type="domain" description="Carrier" evidence="2">
    <location>
        <begin position="2273"/>
        <end position="2347"/>
    </location>
</feature>
<feature type="region of interest" description="Disordered" evidence="5">
    <location>
        <begin position="1"/>
        <end position="21"/>
    </location>
</feature>
<feature type="region of interest" description="Disordered" evidence="5">
    <location>
        <begin position="37"/>
        <end position="80"/>
    </location>
</feature>
<feature type="region of interest" description="Malonyl-CoA:ACP transacylase (MAT) domain" evidence="1">
    <location>
        <begin position="578"/>
        <end position="888"/>
    </location>
</feature>
<feature type="region of interest" description="Dehydratase (DH) domain" evidence="1">
    <location>
        <begin position="958"/>
        <end position="1263"/>
    </location>
</feature>
<feature type="region of interest" description="N-terminal hotdog fold" evidence="4">
    <location>
        <begin position="958"/>
        <end position="1092"/>
    </location>
</feature>
<feature type="region of interest" description="C-terminal hotdog fold" evidence="4">
    <location>
        <begin position="1111"/>
        <end position="1269"/>
    </location>
</feature>
<feature type="region of interest" description="Ketoreductase (KR) domain" evidence="1">
    <location>
        <begin position="1976"/>
        <end position="2164"/>
    </location>
</feature>
<feature type="compositionally biased region" description="Basic and acidic residues" evidence="5">
    <location>
        <begin position="1"/>
        <end position="14"/>
    </location>
</feature>
<feature type="active site" description="For beta-ketoacyl synthase activity" evidence="3">
    <location>
        <position position="194"/>
    </location>
</feature>
<feature type="active site" description="For beta-ketoacyl synthase activity" evidence="3">
    <location>
        <position position="333"/>
    </location>
</feature>
<feature type="active site" description="For beta-ketoacyl synthase activity" evidence="3">
    <location>
        <position position="382"/>
    </location>
</feature>
<feature type="active site" description="Proton acceptor; for dehydratase activity" evidence="4">
    <location>
        <position position="990"/>
    </location>
</feature>
<feature type="active site" description="Proton donor; for dehydratase activity" evidence="4">
    <location>
        <position position="1170"/>
    </location>
</feature>
<feature type="modified residue" description="O-(pantetheine 4'-phosphoryl)serine" evidence="2">
    <location>
        <position position="2307"/>
    </location>
</feature>
<dbReference type="EC" id="2.3.1.-" evidence="11"/>
<dbReference type="EMBL" id="AB872925">
    <property type="protein sequence ID" value="BAO10621.1"/>
    <property type="molecule type" value="Genomic_DNA"/>
</dbReference>
<dbReference type="SMR" id="V5Y0F7"/>
<dbReference type="VEuPathDB" id="FungiDB:CC77DRAFT_176278"/>
<dbReference type="GO" id="GO:0004315">
    <property type="term" value="F:3-oxoacyl-[acyl-carrier-protein] synthase activity"/>
    <property type="evidence" value="ECO:0007669"/>
    <property type="project" value="InterPro"/>
</dbReference>
<dbReference type="GO" id="GO:0004312">
    <property type="term" value="F:fatty acid synthase activity"/>
    <property type="evidence" value="ECO:0007669"/>
    <property type="project" value="TreeGrafter"/>
</dbReference>
<dbReference type="GO" id="GO:0016491">
    <property type="term" value="F:oxidoreductase activity"/>
    <property type="evidence" value="ECO:0007669"/>
    <property type="project" value="UniProtKB-KW"/>
</dbReference>
<dbReference type="GO" id="GO:0031177">
    <property type="term" value="F:phosphopantetheine binding"/>
    <property type="evidence" value="ECO:0007669"/>
    <property type="project" value="InterPro"/>
</dbReference>
<dbReference type="GO" id="GO:0006633">
    <property type="term" value="P:fatty acid biosynthetic process"/>
    <property type="evidence" value="ECO:0007669"/>
    <property type="project" value="InterPro"/>
</dbReference>
<dbReference type="GO" id="GO:0044550">
    <property type="term" value="P:secondary metabolite biosynthetic process"/>
    <property type="evidence" value="ECO:0007669"/>
    <property type="project" value="TreeGrafter"/>
</dbReference>
<dbReference type="CDD" id="cd00833">
    <property type="entry name" value="PKS"/>
    <property type="match status" value="1"/>
</dbReference>
<dbReference type="Gene3D" id="3.40.47.10">
    <property type="match status" value="1"/>
</dbReference>
<dbReference type="Gene3D" id="1.10.1200.10">
    <property type="entry name" value="ACP-like"/>
    <property type="match status" value="1"/>
</dbReference>
<dbReference type="Gene3D" id="3.40.366.10">
    <property type="entry name" value="Malonyl-Coenzyme A Acyl Carrier Protein, domain 2"/>
    <property type="match status" value="1"/>
</dbReference>
<dbReference type="Gene3D" id="3.40.50.720">
    <property type="entry name" value="NAD(P)-binding Rossmann-like Domain"/>
    <property type="match status" value="1"/>
</dbReference>
<dbReference type="Gene3D" id="3.10.129.110">
    <property type="entry name" value="Polyketide synthase dehydratase"/>
    <property type="match status" value="1"/>
</dbReference>
<dbReference type="Gene3D" id="3.40.50.150">
    <property type="entry name" value="Vaccinia Virus protein VP39"/>
    <property type="match status" value="1"/>
</dbReference>
<dbReference type="InterPro" id="IPR001227">
    <property type="entry name" value="Ac_transferase_dom_sf"/>
</dbReference>
<dbReference type="InterPro" id="IPR036736">
    <property type="entry name" value="ACP-like_sf"/>
</dbReference>
<dbReference type="InterPro" id="IPR014043">
    <property type="entry name" value="Acyl_transferase_dom"/>
</dbReference>
<dbReference type="InterPro" id="IPR016035">
    <property type="entry name" value="Acyl_Trfase/lysoPLipase"/>
</dbReference>
<dbReference type="InterPro" id="IPR018201">
    <property type="entry name" value="Ketoacyl_synth_AS"/>
</dbReference>
<dbReference type="InterPro" id="IPR014031">
    <property type="entry name" value="Ketoacyl_synth_C"/>
</dbReference>
<dbReference type="InterPro" id="IPR014030">
    <property type="entry name" value="Ketoacyl_synth_N"/>
</dbReference>
<dbReference type="InterPro" id="IPR016036">
    <property type="entry name" value="Malonyl_transacylase_ACP-bd"/>
</dbReference>
<dbReference type="InterPro" id="IPR036291">
    <property type="entry name" value="NAD(P)-bd_dom_sf"/>
</dbReference>
<dbReference type="InterPro" id="IPR020841">
    <property type="entry name" value="PKS_Beta-ketoAc_synthase_dom"/>
</dbReference>
<dbReference type="InterPro" id="IPR042104">
    <property type="entry name" value="PKS_dehydratase_sf"/>
</dbReference>
<dbReference type="InterPro" id="IPR020807">
    <property type="entry name" value="PKS_DH"/>
</dbReference>
<dbReference type="InterPro" id="IPR049551">
    <property type="entry name" value="PKS_DH_C"/>
</dbReference>
<dbReference type="InterPro" id="IPR049552">
    <property type="entry name" value="PKS_DH_N"/>
</dbReference>
<dbReference type="InterPro" id="IPR013968">
    <property type="entry name" value="PKS_KR"/>
</dbReference>
<dbReference type="InterPro" id="IPR049900">
    <property type="entry name" value="PKS_mFAS_DH"/>
</dbReference>
<dbReference type="InterPro" id="IPR050091">
    <property type="entry name" value="PKS_NRPS_Biosynth_Enz"/>
</dbReference>
<dbReference type="InterPro" id="IPR020806">
    <property type="entry name" value="PKS_PP-bd"/>
</dbReference>
<dbReference type="InterPro" id="IPR009081">
    <property type="entry name" value="PP-bd_ACP"/>
</dbReference>
<dbReference type="InterPro" id="IPR006162">
    <property type="entry name" value="Ppantetheine_attach_site"/>
</dbReference>
<dbReference type="InterPro" id="IPR029063">
    <property type="entry name" value="SAM-dependent_MTases_sf"/>
</dbReference>
<dbReference type="InterPro" id="IPR016039">
    <property type="entry name" value="Thiolase-like"/>
</dbReference>
<dbReference type="PANTHER" id="PTHR43775">
    <property type="entry name" value="FATTY ACID SYNTHASE"/>
    <property type="match status" value="1"/>
</dbReference>
<dbReference type="PANTHER" id="PTHR43775:SF20">
    <property type="entry name" value="HYBRID PKS-NRPS SYNTHETASE APDA"/>
    <property type="match status" value="1"/>
</dbReference>
<dbReference type="Pfam" id="PF00698">
    <property type="entry name" value="Acyl_transf_1"/>
    <property type="match status" value="1"/>
</dbReference>
<dbReference type="Pfam" id="PF22621">
    <property type="entry name" value="CurL-like_PKS_C"/>
    <property type="match status" value="1"/>
</dbReference>
<dbReference type="Pfam" id="PF00109">
    <property type="entry name" value="ketoacyl-synt"/>
    <property type="match status" value="1"/>
</dbReference>
<dbReference type="Pfam" id="PF02801">
    <property type="entry name" value="Ketoacyl-synt_C"/>
    <property type="match status" value="1"/>
</dbReference>
<dbReference type="Pfam" id="PF08659">
    <property type="entry name" value="KR"/>
    <property type="match status" value="1"/>
</dbReference>
<dbReference type="Pfam" id="PF21089">
    <property type="entry name" value="PKS_DH_N"/>
    <property type="match status" value="1"/>
</dbReference>
<dbReference type="Pfam" id="PF00550">
    <property type="entry name" value="PP-binding"/>
    <property type="match status" value="1"/>
</dbReference>
<dbReference type="Pfam" id="PF14765">
    <property type="entry name" value="PS-DH"/>
    <property type="match status" value="1"/>
</dbReference>
<dbReference type="SMART" id="SM00827">
    <property type="entry name" value="PKS_AT"/>
    <property type="match status" value="1"/>
</dbReference>
<dbReference type="SMART" id="SM00826">
    <property type="entry name" value="PKS_DH"/>
    <property type="match status" value="1"/>
</dbReference>
<dbReference type="SMART" id="SM00822">
    <property type="entry name" value="PKS_KR"/>
    <property type="match status" value="1"/>
</dbReference>
<dbReference type="SMART" id="SM00825">
    <property type="entry name" value="PKS_KS"/>
    <property type="match status" value="1"/>
</dbReference>
<dbReference type="SMART" id="SM00823">
    <property type="entry name" value="PKS_PP"/>
    <property type="match status" value="1"/>
</dbReference>
<dbReference type="SUPFAM" id="SSF47336">
    <property type="entry name" value="ACP-like"/>
    <property type="match status" value="1"/>
</dbReference>
<dbReference type="SUPFAM" id="SSF52151">
    <property type="entry name" value="FabD/lysophospholipase-like"/>
    <property type="match status" value="1"/>
</dbReference>
<dbReference type="SUPFAM" id="SSF51735">
    <property type="entry name" value="NAD(P)-binding Rossmann-fold domains"/>
    <property type="match status" value="1"/>
</dbReference>
<dbReference type="SUPFAM" id="SSF55048">
    <property type="entry name" value="Probable ACP-binding domain of malonyl-CoA ACP transacylase"/>
    <property type="match status" value="1"/>
</dbReference>
<dbReference type="SUPFAM" id="SSF53901">
    <property type="entry name" value="Thiolase-like"/>
    <property type="match status" value="1"/>
</dbReference>
<dbReference type="PROSITE" id="PS50075">
    <property type="entry name" value="CARRIER"/>
    <property type="match status" value="1"/>
</dbReference>
<dbReference type="PROSITE" id="PS00606">
    <property type="entry name" value="KS3_1"/>
    <property type="match status" value="1"/>
</dbReference>
<dbReference type="PROSITE" id="PS52004">
    <property type="entry name" value="KS3_2"/>
    <property type="match status" value="1"/>
</dbReference>
<dbReference type="PROSITE" id="PS00012">
    <property type="entry name" value="PHOSPHOPANTETHEINE"/>
    <property type="match status" value="1"/>
</dbReference>
<dbReference type="PROSITE" id="PS52019">
    <property type="entry name" value="PKS_MFAS_DH"/>
    <property type="match status" value="1"/>
</dbReference>